<proteinExistence type="evidence at protein level"/>
<sequence>MSAFFLNMKKSIITQKIIAKAFKDLMQSNAYHQISVSDIMQTAKIRRQTFYNYFQNQEELLSWIFENDFAELINDNSDYYGWQNELLLLLRYLDENQIFYQKIFVIDKNFEHFFLIQWENLLDKVIFDQEKKSDYHWSDLEKSFICRYNAAAICAITRESIIRGNSLEKLYSQIVNLLLAQIKIFES</sequence>
<protein>
    <recommendedName>
        <fullName>HTH-type dhaKLM operon transcriptional activator DhaS</fullName>
    </recommendedName>
</protein>
<evidence type="ECO:0000255" key="1">
    <source>
        <dbReference type="PROSITE-ProRule" id="PRU00335"/>
    </source>
</evidence>
<evidence type="ECO:0000269" key="2">
    <source>
    </source>
</evidence>
<evidence type="ECO:0007829" key="3">
    <source>
        <dbReference type="PDB" id="2IU5"/>
    </source>
</evidence>
<dbReference type="EMBL" id="AE005176">
    <property type="protein sequence ID" value="AAK04345.1"/>
    <property type="molecule type" value="Genomic_DNA"/>
</dbReference>
<dbReference type="PIR" id="G86655">
    <property type="entry name" value="G86655"/>
</dbReference>
<dbReference type="PDB" id="2IU5">
    <property type="method" value="X-ray"/>
    <property type="resolution" value="1.60 A"/>
    <property type="chains" value="A/B=1-187"/>
</dbReference>
<dbReference type="PDBsum" id="2IU5"/>
<dbReference type="SMR" id="Q9CIV9"/>
<dbReference type="PaxDb" id="272623-L45062"/>
<dbReference type="EnsemblBacteria" id="AAK04345">
    <property type="protein sequence ID" value="AAK04345"/>
    <property type="gene ID" value="L45062"/>
</dbReference>
<dbReference type="KEGG" id="lla:L45062"/>
<dbReference type="eggNOG" id="COG1309">
    <property type="taxonomic scope" value="Bacteria"/>
</dbReference>
<dbReference type="HOGENOM" id="CLU_087539_2_2_9"/>
<dbReference type="OrthoDB" id="9810250at2"/>
<dbReference type="EvolutionaryTrace" id="Q9CIV9"/>
<dbReference type="Proteomes" id="UP000002196">
    <property type="component" value="Chromosome"/>
</dbReference>
<dbReference type="GO" id="GO:0003677">
    <property type="term" value="F:DNA binding"/>
    <property type="evidence" value="ECO:0007669"/>
    <property type="project" value="UniProtKB-KW"/>
</dbReference>
<dbReference type="Gene3D" id="1.10.357.10">
    <property type="entry name" value="Tetracycline Repressor, domain 2"/>
    <property type="match status" value="1"/>
</dbReference>
<dbReference type="InterPro" id="IPR009057">
    <property type="entry name" value="Homeodomain-like_sf"/>
</dbReference>
<dbReference type="InterPro" id="IPR050624">
    <property type="entry name" value="HTH-type_Tx_Regulator"/>
</dbReference>
<dbReference type="InterPro" id="IPR001647">
    <property type="entry name" value="HTH_TetR"/>
</dbReference>
<dbReference type="InterPro" id="IPR036271">
    <property type="entry name" value="Tet_transcr_reg_TetR-rel_C_sf"/>
</dbReference>
<dbReference type="InterPro" id="IPR039532">
    <property type="entry name" value="TetR_C_Firmicutes"/>
</dbReference>
<dbReference type="InterPro" id="IPR012738">
    <property type="entry name" value="Tscrpt_reg_DhaS"/>
</dbReference>
<dbReference type="NCBIfam" id="TIGR02366">
    <property type="entry name" value="DHAK_reg"/>
    <property type="match status" value="1"/>
</dbReference>
<dbReference type="PANTHER" id="PTHR43479">
    <property type="entry name" value="ACREF/ENVCD OPERON REPRESSOR-RELATED"/>
    <property type="match status" value="1"/>
</dbReference>
<dbReference type="PANTHER" id="PTHR43479:SF7">
    <property type="entry name" value="TETR-FAMILY TRANSCRIPTIONAL REGULATOR"/>
    <property type="match status" value="1"/>
</dbReference>
<dbReference type="Pfam" id="PF14278">
    <property type="entry name" value="TetR_C_8"/>
    <property type="match status" value="1"/>
</dbReference>
<dbReference type="Pfam" id="PF00440">
    <property type="entry name" value="TetR_N"/>
    <property type="match status" value="1"/>
</dbReference>
<dbReference type="SUPFAM" id="SSF46689">
    <property type="entry name" value="Homeodomain-like"/>
    <property type="match status" value="1"/>
</dbReference>
<dbReference type="SUPFAM" id="SSF48498">
    <property type="entry name" value="Tetracyclin repressor-like, C-terminal domain"/>
    <property type="match status" value="1"/>
</dbReference>
<dbReference type="PROSITE" id="PS50977">
    <property type="entry name" value="HTH_TETR_2"/>
    <property type="match status" value="1"/>
</dbReference>
<gene>
    <name type="primary">dhaS</name>
    <name type="synonym">dhaR</name>
    <name type="ordered locus">LL0247</name>
    <name type="ORF">L45062</name>
</gene>
<feature type="chain" id="PRO_0000270533" description="HTH-type dhaKLM operon transcriptional activator DhaS">
    <location>
        <begin position="1"/>
        <end position="187"/>
    </location>
</feature>
<feature type="domain" description="HTH tetR-type" evidence="1">
    <location>
        <begin position="12"/>
        <end position="72"/>
    </location>
</feature>
<feature type="DNA-binding region" description="H-T-H motif" evidence="1">
    <location>
        <begin position="35"/>
        <end position="54"/>
    </location>
</feature>
<feature type="helix" evidence="3">
    <location>
        <begin position="13"/>
        <end position="28"/>
    </location>
</feature>
<feature type="helix" evidence="3">
    <location>
        <begin position="31"/>
        <end position="33"/>
    </location>
</feature>
<feature type="helix" evidence="3">
    <location>
        <begin position="36"/>
        <end position="43"/>
    </location>
</feature>
<feature type="helix" evidence="3">
    <location>
        <begin position="47"/>
        <end position="52"/>
    </location>
</feature>
<feature type="helix" evidence="3">
    <location>
        <begin position="57"/>
        <end position="73"/>
    </location>
</feature>
<feature type="helix" evidence="3">
    <location>
        <begin position="82"/>
        <end position="95"/>
    </location>
</feature>
<feature type="helix" evidence="3">
    <location>
        <begin position="97"/>
        <end position="106"/>
    </location>
</feature>
<feature type="helix" evidence="3">
    <location>
        <begin position="110"/>
        <end position="132"/>
    </location>
</feature>
<feature type="helix" evidence="3">
    <location>
        <begin position="139"/>
        <end position="163"/>
    </location>
</feature>
<feature type="helix" evidence="3">
    <location>
        <begin position="168"/>
        <end position="170"/>
    </location>
</feature>
<feature type="helix" evidence="3">
    <location>
        <begin position="171"/>
        <end position="183"/>
    </location>
</feature>
<name>DHAS_LACLA</name>
<comment type="function">
    <text evidence="2">In complex with DhaQ, upon activation by dihydroxyacetone, activates transcription of the dhaKLM operon. Binds the inverted repeat sequence 5'-GGACACATN(6)ATTTGTCC-3' located upstream of and partially overlapping with the -35 promoter sequence of the dhaKLM operon promoter.</text>
</comment>
<comment type="subunit">
    <text evidence="2">Homodimer. Interacts with a homodimer of DhaQ.</text>
</comment>
<organism>
    <name type="scientific">Lactococcus lactis subsp. lactis (strain IL1403)</name>
    <name type="common">Streptococcus lactis</name>
    <dbReference type="NCBI Taxonomy" id="272623"/>
    <lineage>
        <taxon>Bacteria</taxon>
        <taxon>Bacillati</taxon>
        <taxon>Bacillota</taxon>
        <taxon>Bacilli</taxon>
        <taxon>Lactobacillales</taxon>
        <taxon>Streptococcaceae</taxon>
        <taxon>Lactococcus</taxon>
    </lineage>
</organism>
<reference key="1">
    <citation type="journal article" date="2001" name="Genome Res.">
        <title>The complete genome sequence of the lactic acid bacterium Lactococcus lactis ssp. lactis IL1403.</title>
        <authorList>
            <person name="Bolotin A."/>
            <person name="Wincker P."/>
            <person name="Mauger S."/>
            <person name="Jaillon O."/>
            <person name="Malarme K."/>
            <person name="Weissenbach J."/>
            <person name="Ehrlich S.D."/>
            <person name="Sorokin A."/>
        </authorList>
    </citation>
    <scope>NUCLEOTIDE SEQUENCE [LARGE SCALE GENOMIC DNA]</scope>
    <source>
        <strain>IL1403</strain>
    </source>
</reference>
<reference key="2">
    <citation type="journal article" date="2006" name="J. Biol. Chem.">
        <title>Regulation of the Dha operon of Lactococcus lactis: a deviation from the rule followed by the Tetr family of transcription regulators.</title>
        <authorList>
            <person name="Christen S."/>
            <person name="Srinivas A."/>
            <person name="Baehler P."/>
            <person name="Zeller A."/>
            <person name="Pridmore D."/>
            <person name="Bieniossek C."/>
            <person name="Baumann U."/>
            <person name="Erni B."/>
        </authorList>
    </citation>
    <scope>X-RAY CRYSTALLOGRAPHY (1.6 ANGSTROMS)</scope>
    <scope>FUNCTION</scope>
    <scope>SUBUNIT</scope>
</reference>
<accession>Q9CIV9</accession>
<keyword id="KW-0002">3D-structure</keyword>
<keyword id="KW-0010">Activator</keyword>
<keyword id="KW-0238">DNA-binding</keyword>
<keyword id="KW-1185">Reference proteome</keyword>
<keyword id="KW-0804">Transcription</keyword>
<keyword id="KW-0805">Transcription regulation</keyword>